<gene>
    <name type="primary">pygo</name>
    <name type="synonym">gam</name>
    <name type="ORF">CG11518</name>
</gene>
<reference key="1">
    <citation type="journal article" date="2002" name="Cell">
        <title>Wnt/wingless signaling requires BCL9/legless-mediated recruitment of pygopus to the nuclear beta-catenin-TCF complex.</title>
        <authorList>
            <person name="Kramps T."/>
            <person name="Peter O."/>
            <person name="Brunner E."/>
            <person name="Nellen D."/>
            <person name="Froesch B."/>
            <person name="Chatterjee S."/>
            <person name="Murone M."/>
            <person name="Zuellig S."/>
            <person name="Basler K."/>
        </authorList>
    </citation>
    <scope>NUCLEOTIDE SEQUENCE [MRNA]</scope>
</reference>
<reference key="2">
    <citation type="journal article" date="2002" name="Development">
        <title>Pygopus, a nuclear PHD-finger protein required for wingless signaling in Drosophila.</title>
        <authorList>
            <person name="Parker D.S."/>
            <person name="Jemison J."/>
            <person name="Cadigan K.M."/>
        </authorList>
    </citation>
    <scope>NUCLEOTIDE SEQUENCE</scope>
    <source>
        <tissue>Head</tissue>
    </source>
</reference>
<reference key="3">
    <citation type="journal article" date="2000" name="Science">
        <title>The genome sequence of Drosophila melanogaster.</title>
        <authorList>
            <person name="Adams M.D."/>
            <person name="Celniker S.E."/>
            <person name="Holt R.A."/>
            <person name="Evans C.A."/>
            <person name="Gocayne J.D."/>
            <person name="Amanatides P.G."/>
            <person name="Scherer S.E."/>
            <person name="Li P.W."/>
            <person name="Hoskins R.A."/>
            <person name="Galle R.F."/>
            <person name="George R.A."/>
            <person name="Lewis S.E."/>
            <person name="Richards S."/>
            <person name="Ashburner M."/>
            <person name="Henderson S.N."/>
            <person name="Sutton G.G."/>
            <person name="Wortman J.R."/>
            <person name="Yandell M.D."/>
            <person name="Zhang Q."/>
            <person name="Chen L.X."/>
            <person name="Brandon R.C."/>
            <person name="Rogers Y.-H.C."/>
            <person name="Blazej R.G."/>
            <person name="Champe M."/>
            <person name="Pfeiffer B.D."/>
            <person name="Wan K.H."/>
            <person name="Doyle C."/>
            <person name="Baxter E.G."/>
            <person name="Helt G."/>
            <person name="Nelson C.R."/>
            <person name="Miklos G.L.G."/>
            <person name="Abril J.F."/>
            <person name="Agbayani A."/>
            <person name="An H.-J."/>
            <person name="Andrews-Pfannkoch C."/>
            <person name="Baldwin D."/>
            <person name="Ballew R.M."/>
            <person name="Basu A."/>
            <person name="Baxendale J."/>
            <person name="Bayraktaroglu L."/>
            <person name="Beasley E.M."/>
            <person name="Beeson K.Y."/>
            <person name="Benos P.V."/>
            <person name="Berman B.P."/>
            <person name="Bhandari D."/>
            <person name="Bolshakov S."/>
            <person name="Borkova D."/>
            <person name="Botchan M.R."/>
            <person name="Bouck J."/>
            <person name="Brokstein P."/>
            <person name="Brottier P."/>
            <person name="Burtis K.C."/>
            <person name="Busam D.A."/>
            <person name="Butler H."/>
            <person name="Cadieu E."/>
            <person name="Center A."/>
            <person name="Chandra I."/>
            <person name="Cherry J.M."/>
            <person name="Cawley S."/>
            <person name="Dahlke C."/>
            <person name="Davenport L.B."/>
            <person name="Davies P."/>
            <person name="de Pablos B."/>
            <person name="Delcher A."/>
            <person name="Deng Z."/>
            <person name="Mays A.D."/>
            <person name="Dew I."/>
            <person name="Dietz S.M."/>
            <person name="Dodson K."/>
            <person name="Doup L.E."/>
            <person name="Downes M."/>
            <person name="Dugan-Rocha S."/>
            <person name="Dunkov B.C."/>
            <person name="Dunn P."/>
            <person name="Durbin K.J."/>
            <person name="Evangelista C.C."/>
            <person name="Ferraz C."/>
            <person name="Ferriera S."/>
            <person name="Fleischmann W."/>
            <person name="Fosler C."/>
            <person name="Gabrielian A.E."/>
            <person name="Garg N.S."/>
            <person name="Gelbart W.M."/>
            <person name="Glasser K."/>
            <person name="Glodek A."/>
            <person name="Gong F."/>
            <person name="Gorrell J.H."/>
            <person name="Gu Z."/>
            <person name="Guan P."/>
            <person name="Harris M."/>
            <person name="Harris N.L."/>
            <person name="Harvey D.A."/>
            <person name="Heiman T.J."/>
            <person name="Hernandez J.R."/>
            <person name="Houck J."/>
            <person name="Hostin D."/>
            <person name="Houston K.A."/>
            <person name="Howland T.J."/>
            <person name="Wei M.-H."/>
            <person name="Ibegwam C."/>
            <person name="Jalali M."/>
            <person name="Kalush F."/>
            <person name="Karpen G.H."/>
            <person name="Ke Z."/>
            <person name="Kennison J.A."/>
            <person name="Ketchum K.A."/>
            <person name="Kimmel B.E."/>
            <person name="Kodira C.D."/>
            <person name="Kraft C.L."/>
            <person name="Kravitz S."/>
            <person name="Kulp D."/>
            <person name="Lai Z."/>
            <person name="Lasko P."/>
            <person name="Lei Y."/>
            <person name="Levitsky A.A."/>
            <person name="Li J.H."/>
            <person name="Li Z."/>
            <person name="Liang Y."/>
            <person name="Lin X."/>
            <person name="Liu X."/>
            <person name="Mattei B."/>
            <person name="McIntosh T.C."/>
            <person name="McLeod M.P."/>
            <person name="McPherson D."/>
            <person name="Merkulov G."/>
            <person name="Milshina N.V."/>
            <person name="Mobarry C."/>
            <person name="Morris J."/>
            <person name="Moshrefi A."/>
            <person name="Mount S.M."/>
            <person name="Moy M."/>
            <person name="Murphy B."/>
            <person name="Murphy L."/>
            <person name="Muzny D.M."/>
            <person name="Nelson D.L."/>
            <person name="Nelson D.R."/>
            <person name="Nelson K.A."/>
            <person name="Nixon K."/>
            <person name="Nusskern D.R."/>
            <person name="Pacleb J.M."/>
            <person name="Palazzolo M."/>
            <person name="Pittman G.S."/>
            <person name="Pan S."/>
            <person name="Pollard J."/>
            <person name="Puri V."/>
            <person name="Reese M.G."/>
            <person name="Reinert K."/>
            <person name="Remington K."/>
            <person name="Saunders R.D.C."/>
            <person name="Scheeler F."/>
            <person name="Shen H."/>
            <person name="Shue B.C."/>
            <person name="Siden-Kiamos I."/>
            <person name="Simpson M."/>
            <person name="Skupski M.P."/>
            <person name="Smith T.J."/>
            <person name="Spier E."/>
            <person name="Spradling A.C."/>
            <person name="Stapleton M."/>
            <person name="Strong R."/>
            <person name="Sun E."/>
            <person name="Svirskas R."/>
            <person name="Tector C."/>
            <person name="Turner R."/>
            <person name="Venter E."/>
            <person name="Wang A.H."/>
            <person name="Wang X."/>
            <person name="Wang Z.-Y."/>
            <person name="Wassarman D.A."/>
            <person name="Weinstock G.M."/>
            <person name="Weissenbach J."/>
            <person name="Williams S.M."/>
            <person name="Woodage T."/>
            <person name="Worley K.C."/>
            <person name="Wu D."/>
            <person name="Yang S."/>
            <person name="Yao Q.A."/>
            <person name="Ye J."/>
            <person name="Yeh R.-F."/>
            <person name="Zaveri J.S."/>
            <person name="Zhan M."/>
            <person name="Zhang G."/>
            <person name="Zhao Q."/>
            <person name="Zheng L."/>
            <person name="Zheng X.H."/>
            <person name="Zhong F.N."/>
            <person name="Zhong W."/>
            <person name="Zhou X."/>
            <person name="Zhu S.C."/>
            <person name="Zhu X."/>
            <person name="Smith H.O."/>
            <person name="Gibbs R.A."/>
            <person name="Myers E.W."/>
            <person name="Rubin G.M."/>
            <person name="Venter J.C."/>
        </authorList>
    </citation>
    <scope>NUCLEOTIDE SEQUENCE [LARGE SCALE GENOMIC DNA]</scope>
    <source>
        <strain>Berkeley</strain>
    </source>
</reference>
<reference key="4">
    <citation type="journal article" date="2002" name="Genome Biol.">
        <title>Annotation of the Drosophila melanogaster euchromatic genome: a systematic review.</title>
        <authorList>
            <person name="Misra S."/>
            <person name="Crosby M.A."/>
            <person name="Mungall C.J."/>
            <person name="Matthews B.B."/>
            <person name="Campbell K.S."/>
            <person name="Hradecky P."/>
            <person name="Huang Y."/>
            <person name="Kaminker J.S."/>
            <person name="Millburn G.H."/>
            <person name="Prochnik S.E."/>
            <person name="Smith C.D."/>
            <person name="Tupy J.L."/>
            <person name="Whitfield E.J."/>
            <person name="Bayraktaroglu L."/>
            <person name="Berman B.P."/>
            <person name="Bettencourt B.R."/>
            <person name="Celniker S.E."/>
            <person name="de Grey A.D.N.J."/>
            <person name="Drysdale R.A."/>
            <person name="Harris N.L."/>
            <person name="Richter J."/>
            <person name="Russo S."/>
            <person name="Schroeder A.J."/>
            <person name="Shu S.Q."/>
            <person name="Stapleton M."/>
            <person name="Yamada C."/>
            <person name="Ashburner M."/>
            <person name="Gelbart W.M."/>
            <person name="Rubin G.M."/>
            <person name="Lewis S.E."/>
        </authorList>
    </citation>
    <scope>GENOME REANNOTATION</scope>
    <source>
        <strain>Berkeley</strain>
    </source>
</reference>
<reference key="5">
    <citation type="journal article" date="2002" name="Genome Biol.">
        <title>A Drosophila full-length cDNA resource.</title>
        <authorList>
            <person name="Stapleton M."/>
            <person name="Carlson J.W."/>
            <person name="Brokstein P."/>
            <person name="Yu C."/>
            <person name="Champe M."/>
            <person name="George R.A."/>
            <person name="Guarin H."/>
            <person name="Kronmiller B."/>
            <person name="Pacleb J.M."/>
            <person name="Park S."/>
            <person name="Wan K.H."/>
            <person name="Rubin G.M."/>
            <person name="Celniker S.E."/>
        </authorList>
    </citation>
    <scope>NUCLEOTIDE SEQUENCE [LARGE SCALE MRNA]</scope>
    <source>
        <strain>Berkeley</strain>
        <tissue>Embryo</tissue>
    </source>
</reference>
<organism>
    <name type="scientific">Drosophila melanogaster</name>
    <name type="common">Fruit fly</name>
    <dbReference type="NCBI Taxonomy" id="7227"/>
    <lineage>
        <taxon>Eukaryota</taxon>
        <taxon>Metazoa</taxon>
        <taxon>Ecdysozoa</taxon>
        <taxon>Arthropoda</taxon>
        <taxon>Hexapoda</taxon>
        <taxon>Insecta</taxon>
        <taxon>Pterygota</taxon>
        <taxon>Neoptera</taxon>
        <taxon>Endopterygota</taxon>
        <taxon>Diptera</taxon>
        <taxon>Brachycera</taxon>
        <taxon>Muscomorpha</taxon>
        <taxon>Ephydroidea</taxon>
        <taxon>Drosophilidae</taxon>
        <taxon>Drosophila</taxon>
        <taxon>Sophophora</taxon>
    </lineage>
</organism>
<accession>Q9V9W8</accession>
<name>PYGO_DROME</name>
<protein>
    <recommendedName>
        <fullName>Protein pygopus</fullName>
    </recommendedName>
    <alternativeName>
        <fullName>Protein gammy legs</fullName>
    </alternativeName>
</protein>
<dbReference type="EMBL" id="AF457206">
    <property type="protein sequence ID" value="AAL91369.1"/>
    <property type="molecule type" value="mRNA"/>
</dbReference>
<dbReference type="EMBL" id="AY075095">
    <property type="protein sequence ID" value="AAL79357.1"/>
    <property type="molecule type" value="mRNA"/>
</dbReference>
<dbReference type="EMBL" id="AE014297">
    <property type="protein sequence ID" value="AAF57161.1"/>
    <property type="molecule type" value="Genomic_DNA"/>
</dbReference>
<dbReference type="EMBL" id="AY058500">
    <property type="protein sequence ID" value="AAL13729.1"/>
    <property type="molecule type" value="mRNA"/>
</dbReference>
<dbReference type="RefSeq" id="NP_651872.1">
    <property type="nucleotide sequence ID" value="NM_143615.4"/>
</dbReference>
<dbReference type="PDB" id="3ZPV">
    <property type="method" value="X-ray"/>
    <property type="resolution" value="2.68 A"/>
    <property type="chains" value="1/3/5/7/9/A/C/E/G/I/K/M/O/Q/S/U/W/Y=747-804"/>
</dbReference>
<dbReference type="PDBsum" id="3ZPV"/>
<dbReference type="SMR" id="Q9V9W8"/>
<dbReference type="BioGRID" id="68561">
    <property type="interactions" value="13"/>
</dbReference>
<dbReference type="ComplexPortal" id="CPX-2563">
    <property type="entry name" value="Wnt enhanceosome complex"/>
</dbReference>
<dbReference type="DIP" id="DIP-29989N"/>
<dbReference type="FunCoup" id="Q9V9W8">
    <property type="interactions" value="521"/>
</dbReference>
<dbReference type="IntAct" id="Q9V9W8">
    <property type="interactions" value="5"/>
</dbReference>
<dbReference type="STRING" id="7227.FBpp0085167"/>
<dbReference type="GlyGen" id="Q9V9W8">
    <property type="glycosylation" value="2 sites"/>
</dbReference>
<dbReference type="PaxDb" id="7227-FBpp0085167"/>
<dbReference type="EnsemblMetazoa" id="FBtr0085806">
    <property type="protein sequence ID" value="FBpp0085167"/>
    <property type="gene ID" value="FBgn0043900"/>
</dbReference>
<dbReference type="GeneID" id="43718"/>
<dbReference type="KEGG" id="dme:Dmel_CG11518"/>
<dbReference type="AGR" id="FB:FBgn0043900"/>
<dbReference type="CTD" id="43718"/>
<dbReference type="FlyBase" id="FBgn0043900">
    <property type="gene designation" value="pygo"/>
</dbReference>
<dbReference type="VEuPathDB" id="VectorBase:FBgn0043900"/>
<dbReference type="eggNOG" id="ENOG502QSRS">
    <property type="taxonomic scope" value="Eukaryota"/>
</dbReference>
<dbReference type="GeneTree" id="ENSGT00530000063948"/>
<dbReference type="HOGENOM" id="CLU_377342_0_0_1"/>
<dbReference type="InParanoid" id="Q9V9W8"/>
<dbReference type="OMA" id="GGGKMYP"/>
<dbReference type="OrthoDB" id="270215at2759"/>
<dbReference type="PhylomeDB" id="Q9V9W8"/>
<dbReference type="Reactome" id="R-DME-201722">
    <property type="pathway name" value="Formation of the beta-catenin:TCF transactivating complex"/>
</dbReference>
<dbReference type="Reactome" id="R-DME-209407">
    <property type="pathway name" value="Transport of ARM to the nucleus"/>
</dbReference>
<dbReference type="Reactome" id="R-DME-209421">
    <property type="pathway name" value="Transcription activation by ARM"/>
</dbReference>
<dbReference type="SignaLink" id="Q9V9W8"/>
<dbReference type="BioGRID-ORCS" id="43718">
    <property type="hits" value="0 hits in 3 CRISPR screens"/>
</dbReference>
<dbReference type="ChiTaRS" id="pygo">
    <property type="organism name" value="fly"/>
</dbReference>
<dbReference type="EvolutionaryTrace" id="Q9V9W8"/>
<dbReference type="GenomeRNAi" id="43718"/>
<dbReference type="PRO" id="PR:Q9V9W8"/>
<dbReference type="Proteomes" id="UP000000803">
    <property type="component" value="Chromosome 3R"/>
</dbReference>
<dbReference type="Bgee" id="FBgn0043900">
    <property type="expression patterns" value="Expressed in cleaving embryo and 152 other cell types or tissues"/>
</dbReference>
<dbReference type="GO" id="GO:1990907">
    <property type="term" value="C:beta-catenin-TCF complex"/>
    <property type="evidence" value="ECO:0000314"/>
    <property type="project" value="FlyBase"/>
</dbReference>
<dbReference type="GO" id="GO:0005654">
    <property type="term" value="C:nucleoplasm"/>
    <property type="evidence" value="ECO:0000304"/>
    <property type="project" value="Reactome"/>
</dbReference>
<dbReference type="GO" id="GO:0005634">
    <property type="term" value="C:nucleus"/>
    <property type="evidence" value="ECO:0000314"/>
    <property type="project" value="FlyBase"/>
</dbReference>
<dbReference type="GO" id="GO:0140002">
    <property type="term" value="F:histone H3K4me3 reader activity"/>
    <property type="evidence" value="ECO:0000314"/>
    <property type="project" value="FlyBase"/>
</dbReference>
<dbReference type="GO" id="GO:0003713">
    <property type="term" value="F:transcription coactivator activity"/>
    <property type="evidence" value="ECO:0000314"/>
    <property type="project" value="FlyBase"/>
</dbReference>
<dbReference type="GO" id="GO:0008270">
    <property type="term" value="F:zinc ion binding"/>
    <property type="evidence" value="ECO:0007669"/>
    <property type="project" value="UniProtKB-KW"/>
</dbReference>
<dbReference type="GO" id="GO:0060070">
    <property type="term" value="P:canonical Wnt signaling pathway"/>
    <property type="evidence" value="ECO:0000314"/>
    <property type="project" value="FlyBase"/>
</dbReference>
<dbReference type="GO" id="GO:0035293">
    <property type="term" value="P:chitin-based larval cuticle pattern formation"/>
    <property type="evidence" value="ECO:0000315"/>
    <property type="project" value="FlyBase"/>
</dbReference>
<dbReference type="GO" id="GO:0060232">
    <property type="term" value="P:delamination"/>
    <property type="evidence" value="ECO:0000315"/>
    <property type="project" value="FlyBase"/>
</dbReference>
<dbReference type="GO" id="GO:0009880">
    <property type="term" value="P:embryonic pattern specification"/>
    <property type="evidence" value="ECO:0000315"/>
    <property type="project" value="FlyBase"/>
</dbReference>
<dbReference type="GO" id="GO:0035214">
    <property type="term" value="P:eye-antennal disc development"/>
    <property type="evidence" value="ECO:0000315"/>
    <property type="project" value="FlyBase"/>
</dbReference>
<dbReference type="GO" id="GO:0048526">
    <property type="term" value="P:imaginal disc-derived wing expansion"/>
    <property type="evidence" value="ECO:0000315"/>
    <property type="project" value="FlyBase"/>
</dbReference>
<dbReference type="GO" id="GO:0045944">
    <property type="term" value="P:positive regulation of transcription by RNA polymerase II"/>
    <property type="evidence" value="ECO:0000314"/>
    <property type="project" value="FlyBase"/>
</dbReference>
<dbReference type="GO" id="GO:0006357">
    <property type="term" value="P:regulation of transcription by RNA polymerase II"/>
    <property type="evidence" value="ECO:0000353"/>
    <property type="project" value="UniProtKB"/>
</dbReference>
<dbReference type="GO" id="GO:0007367">
    <property type="term" value="P:segment polarity determination"/>
    <property type="evidence" value="ECO:0000315"/>
    <property type="project" value="UniProtKB"/>
</dbReference>
<dbReference type="GO" id="GO:0007472">
    <property type="term" value="P:wing disc morphogenesis"/>
    <property type="evidence" value="ECO:0000315"/>
    <property type="project" value="FlyBase"/>
</dbReference>
<dbReference type="CDD" id="cd15637">
    <property type="entry name" value="PHD_dPYGO"/>
    <property type="match status" value="1"/>
</dbReference>
<dbReference type="FunFam" id="3.30.40.10:FF:000107">
    <property type="entry name" value="pygopus homolog 1"/>
    <property type="match status" value="1"/>
</dbReference>
<dbReference type="Gene3D" id="3.30.40.10">
    <property type="entry name" value="Zinc/RING finger domain, C3HC4 (zinc finger)"/>
    <property type="match status" value="1"/>
</dbReference>
<dbReference type="InterPro" id="IPR052475">
    <property type="entry name" value="Wnt_Signal_Transd_Protein"/>
</dbReference>
<dbReference type="InterPro" id="IPR019786">
    <property type="entry name" value="Zinc_finger_PHD-type_CS"/>
</dbReference>
<dbReference type="InterPro" id="IPR011011">
    <property type="entry name" value="Znf_FYVE_PHD"/>
</dbReference>
<dbReference type="InterPro" id="IPR001965">
    <property type="entry name" value="Znf_PHD"/>
</dbReference>
<dbReference type="InterPro" id="IPR019787">
    <property type="entry name" value="Znf_PHD-finger"/>
</dbReference>
<dbReference type="InterPro" id="IPR013083">
    <property type="entry name" value="Znf_RING/FYVE/PHD"/>
</dbReference>
<dbReference type="PANTHER" id="PTHR23194:SF16">
    <property type="entry name" value="PROTEIN PYGOPUS"/>
    <property type="match status" value="1"/>
</dbReference>
<dbReference type="PANTHER" id="PTHR23194">
    <property type="entry name" value="PYGOPUS"/>
    <property type="match status" value="1"/>
</dbReference>
<dbReference type="SMART" id="SM00249">
    <property type="entry name" value="PHD"/>
    <property type="match status" value="1"/>
</dbReference>
<dbReference type="SUPFAM" id="SSF57903">
    <property type="entry name" value="FYVE/PHD zinc finger"/>
    <property type="match status" value="1"/>
</dbReference>
<dbReference type="PROSITE" id="PS01359">
    <property type="entry name" value="ZF_PHD_1"/>
    <property type="match status" value="1"/>
</dbReference>
<dbReference type="PROSITE" id="PS50016">
    <property type="entry name" value="ZF_PHD_2"/>
    <property type="match status" value="1"/>
</dbReference>
<feature type="chain" id="PRO_0000097124" description="Protein pygopus">
    <location>
        <begin position="1"/>
        <end position="815"/>
    </location>
</feature>
<feature type="zinc finger region" description="PHD-type" evidence="2">
    <location>
        <begin position="747"/>
        <end position="805"/>
    </location>
</feature>
<feature type="region of interest" description="Disordered" evidence="3">
    <location>
        <begin position="1"/>
        <end position="107"/>
    </location>
</feature>
<feature type="region of interest" description="Disordered" evidence="3">
    <location>
        <begin position="147"/>
        <end position="711"/>
    </location>
</feature>
<feature type="short sequence motif" description="Nuclear localization signal" evidence="1">
    <location>
        <begin position="39"/>
        <end position="45"/>
    </location>
</feature>
<feature type="compositionally biased region" description="Low complexity" evidence="3">
    <location>
        <begin position="46"/>
        <end position="73"/>
    </location>
</feature>
<feature type="compositionally biased region" description="Pro residues" evidence="3">
    <location>
        <begin position="74"/>
        <end position="86"/>
    </location>
</feature>
<feature type="compositionally biased region" description="Low complexity" evidence="3">
    <location>
        <begin position="188"/>
        <end position="199"/>
    </location>
</feature>
<feature type="compositionally biased region" description="Gly residues" evidence="3">
    <location>
        <begin position="230"/>
        <end position="248"/>
    </location>
</feature>
<feature type="compositionally biased region" description="Gly residues" evidence="3">
    <location>
        <begin position="257"/>
        <end position="269"/>
    </location>
</feature>
<feature type="compositionally biased region" description="Pro residues" evidence="3">
    <location>
        <begin position="307"/>
        <end position="316"/>
    </location>
</feature>
<feature type="compositionally biased region" description="Low complexity" evidence="3">
    <location>
        <begin position="323"/>
        <end position="341"/>
    </location>
</feature>
<feature type="compositionally biased region" description="Low complexity" evidence="3">
    <location>
        <begin position="407"/>
        <end position="424"/>
    </location>
</feature>
<feature type="compositionally biased region" description="Low complexity" evidence="3">
    <location>
        <begin position="444"/>
        <end position="478"/>
    </location>
</feature>
<feature type="compositionally biased region" description="Low complexity" evidence="3">
    <location>
        <begin position="495"/>
        <end position="545"/>
    </location>
</feature>
<feature type="compositionally biased region" description="Pro residues" evidence="3">
    <location>
        <begin position="569"/>
        <end position="580"/>
    </location>
</feature>
<feature type="compositionally biased region" description="Gly residues" evidence="3">
    <location>
        <begin position="602"/>
        <end position="621"/>
    </location>
</feature>
<feature type="compositionally biased region" description="Low complexity" evidence="3">
    <location>
        <begin position="622"/>
        <end position="636"/>
    </location>
</feature>
<feature type="compositionally biased region" description="Gly residues" evidence="3">
    <location>
        <begin position="640"/>
        <end position="656"/>
    </location>
</feature>
<feature type="compositionally biased region" description="Basic residues" evidence="3">
    <location>
        <begin position="663"/>
        <end position="675"/>
    </location>
</feature>
<feature type="compositionally biased region" description="Gly residues" evidence="3">
    <location>
        <begin position="678"/>
        <end position="711"/>
    </location>
</feature>
<feature type="sequence conflict" description="In Ref. 1; AAL91369." evidence="4" ref="1">
    <original>S</original>
    <variation>P</variation>
    <location>
        <position position="393"/>
    </location>
</feature>
<feature type="turn" evidence="5">
    <location>
        <begin position="751"/>
        <end position="753"/>
    </location>
</feature>
<feature type="strand" evidence="5">
    <location>
        <begin position="763"/>
        <end position="765"/>
    </location>
</feature>
<feature type="turn" evidence="5">
    <location>
        <begin position="767"/>
        <end position="770"/>
    </location>
</feature>
<feature type="strand" evidence="5">
    <location>
        <begin position="773"/>
        <end position="775"/>
    </location>
</feature>
<feature type="helix" evidence="5">
    <location>
        <begin position="776"/>
        <end position="779"/>
    </location>
</feature>
<feature type="helix" evidence="5">
    <location>
        <begin position="783"/>
        <end position="791"/>
    </location>
</feature>
<feature type="strand" evidence="5">
    <location>
        <begin position="795"/>
        <end position="798"/>
    </location>
</feature>
<feature type="helix" evidence="5">
    <location>
        <begin position="800"/>
        <end position="803"/>
    </location>
</feature>
<keyword id="KW-0002">3D-structure</keyword>
<keyword id="KW-0217">Developmental protein</keyword>
<keyword id="KW-0479">Metal-binding</keyword>
<keyword id="KW-0539">Nucleus</keyword>
<keyword id="KW-1185">Reference proteome</keyword>
<keyword id="KW-0709">Segmentation polarity protein</keyword>
<keyword id="KW-0879">Wnt signaling pathway</keyword>
<keyword id="KW-0862">Zinc</keyword>
<keyword id="KW-0863">Zinc-finger</keyword>
<sequence length="815" mass="80493">MTHNLGMAPYRLPGPAGGLCPPDFKPPPPTDIISAPSNPKKRRKTSSAANSAAAVAAAAAAAAAANSMQQQQAPPTPQDLLPPPPMGGFGDTIIASNPFDDSPQVSAMSSSAAAAMAAMNQMGGGPGGGHFGGGGPGGHPHWEDRMGMGGGPPPPPHMHPHMHPHHPGGPMGHPHGPHPHMGGPPPMRGMSPMHPHQMGPGPGVGLPPHMNHGRPGGPGGPGGPVPMGSPMGGIAGMGGMSPMGGMGGPSISPHHMGMGGLSPMGGGPNGPNPRAMQGSPMGGPGQNSPMNSLPMGSPMGNPIGSPLGPPSGPGPGNPGNTGGPQQQQQQPPQPPMNNGQMGPPPLHSPLGNGPTGHGSHMPGGPIPGPGPGPGGLVGPGGISPAHGNNPGGSGNNMLGGNPGGGNSNNNGSNTSNASNNNQNPHLSPAAGRLGVPTSMQSNGPSVSSVASSSVPSPATPTLTPTSTATSMSTSVPTSSPAPPAMSPHHSLNSAGPSPGMPNSGPSPLQSPAGPNGPNNNNSNNNNGPMMGQMIPNAVPMQHQQHMGGGPPGHGPGPMPGMGMNQMLPPQQPSHLGPPHPNMMNHPHHPHHHPGGPPPHMMGGPGMHGGPAGMPPHMGGGPNPHMMGGPHGNAGPHMGHGHMGGVPGPGPGPGGMNGPPHPHMSPHHGHPHHHHNPMGGPGPNMFGGGGGGPMGPGGPMGNMGPMGGGPMGGPMGVGPKPMTMGGGKMYPPGQPMVFNPQNPNAPPIYPCGMCHKEVNDNDEAVFCESGCNFFFHRTCVGLTEAAFQMLNKEVFAEWCCDKCVSSKHIPMVKFKC</sequence>
<proteinExistence type="evidence at protein level"/>
<comment type="function">
    <text>Involved in signal transduction through the Wnt pathway.</text>
</comment>
<comment type="subunit">
    <text>Binds to BCL9 via the PHD-type zinc finger motif, and thereby becomes part of the nuclear ARM/PAN complex.</text>
</comment>
<comment type="interaction">
    <interactant intactId="EBI-152653">
        <id>Q9V9W8</id>
    </interactant>
    <interactant intactId="EBI-85519">
        <id>Q961D9</id>
        <label>lgs</label>
    </interactant>
    <organismsDiffer>false</organismsDiffer>
    <experiments>4</experiments>
</comment>
<comment type="interaction">
    <interactant intactId="EBI-152653">
        <id>Q9V9W8</id>
    </interactant>
    <interactant intactId="EBI-110730">
        <id>Q7KTX8</id>
        <label>skd</label>
    </interactant>
    <organismsDiffer>false</organismsDiffer>
    <experiments>2</experiments>
</comment>
<comment type="interaction">
    <interactant intactId="EBI-152653">
        <id>Q9V9W8</id>
    </interactant>
    <interactant intactId="EBI-277958">
        <id>P47825</id>
        <label>Taf4</label>
    </interactant>
    <organismsDiffer>false</organismsDiffer>
    <experiments>2</experiments>
</comment>
<comment type="interaction">
    <interactant intactId="EBI-152653">
        <id>Q9V9W8</id>
    </interactant>
    <interactant intactId="EBI-533127">
        <id>O00512</id>
        <label>BCL9</label>
    </interactant>
    <organismsDiffer>true</organismsDiffer>
    <experiments>3</experiments>
</comment>
<comment type="subcellular location">
    <subcellularLocation>
        <location>Nucleus</location>
    </subcellularLocation>
</comment>
<comment type="tissue specificity">
    <text>Ubiquitous throughout embryogenesis and larval development.</text>
</comment>
<comment type="developmental stage">
    <text>Expressed both maternally and zygotically throughout development.</text>
</comment>
<evidence type="ECO:0000255" key="1"/>
<evidence type="ECO:0000255" key="2">
    <source>
        <dbReference type="PROSITE-ProRule" id="PRU00146"/>
    </source>
</evidence>
<evidence type="ECO:0000256" key="3">
    <source>
        <dbReference type="SAM" id="MobiDB-lite"/>
    </source>
</evidence>
<evidence type="ECO:0000305" key="4"/>
<evidence type="ECO:0007829" key="5">
    <source>
        <dbReference type="PDB" id="3ZPV"/>
    </source>
</evidence>